<sequence>MSSETLYDKIWDLHRVAEIPGGSTQLFVGLHLIHEVTSPQAFSALNEKGLSVHCPERTIATVDHIVPTTSQNRPFPDSLAEQMLRTLELNCLKHSIKFFKIGSGNQGIVHVIAPETGLTQPGMTIACGDSHTSTHGAFGSIAFGIGTSQVRDVLASQTLAMKKLKVKRIWFDGYLQKGVFAKDLILHVIQKLGVKDGVGYAYEFAGPAIDGLSMEERMTICNMAIEGGARCGYINPDKTTFNYLKGRPYSPKGKEWEKAILWWESLASSKSAIYDDEVRFNASLIAPTVTWGITPGQSIAIDASIPTPESLDKNDQQIALEAYKYMDLKPGSSIEGIPIDVCFIGSCTNGRLSDLEKAAEIAKNRQVAKGVKAFVVPGSEKVAQDAESQGLDTIFEKAGFEWRKPGCSMCLAMNPDKLERNQISASSSNRNFKGRQGSAQGRTLLMSPAMVAAAAVTGSITDVRKLLH</sequence>
<feature type="chain" id="PRO_0000076779" description="3-isopropylmalate dehydratase large subunit">
    <location>
        <begin position="1"/>
        <end position="468"/>
    </location>
</feature>
<feature type="binding site" evidence="1">
    <location>
        <position position="347"/>
    </location>
    <ligand>
        <name>[4Fe-4S] cluster</name>
        <dbReference type="ChEBI" id="CHEBI:49883"/>
    </ligand>
</feature>
<feature type="binding site" evidence="1">
    <location>
        <position position="407"/>
    </location>
    <ligand>
        <name>[4Fe-4S] cluster</name>
        <dbReference type="ChEBI" id="CHEBI:49883"/>
    </ligand>
</feature>
<feature type="binding site" evidence="1">
    <location>
        <position position="410"/>
    </location>
    <ligand>
        <name>[4Fe-4S] cluster</name>
        <dbReference type="ChEBI" id="CHEBI:49883"/>
    </ligand>
</feature>
<comment type="function">
    <text evidence="1">Catalyzes the isomerization between 2-isopropylmalate and 3-isopropylmalate, via the formation of 2-isopropylmaleate.</text>
</comment>
<comment type="catalytic activity">
    <reaction evidence="1">
        <text>(2R,3S)-3-isopropylmalate = (2S)-2-isopropylmalate</text>
        <dbReference type="Rhea" id="RHEA:32287"/>
        <dbReference type="ChEBI" id="CHEBI:1178"/>
        <dbReference type="ChEBI" id="CHEBI:35121"/>
        <dbReference type="EC" id="4.2.1.33"/>
    </reaction>
</comment>
<comment type="cofactor">
    <cofactor evidence="1">
        <name>[4Fe-4S] cluster</name>
        <dbReference type="ChEBI" id="CHEBI:49883"/>
    </cofactor>
    <text evidence="1">Binds 1 [4Fe-4S] cluster per subunit.</text>
</comment>
<comment type="pathway">
    <text evidence="1">Amino-acid biosynthesis; L-leucine biosynthesis; L-leucine from 3-methyl-2-oxobutanoate: step 2/4.</text>
</comment>
<comment type="subunit">
    <text evidence="1">Heterodimer of LeuC and LeuD.</text>
</comment>
<comment type="similarity">
    <text evidence="1">Belongs to the aconitase/IPM isomerase family. LeuC type 1 subfamily.</text>
</comment>
<accession>Q7VDT0</accession>
<name>LEUC_PROMA</name>
<proteinExistence type="inferred from homology"/>
<gene>
    <name evidence="1" type="primary">leuC</name>
    <name type="ordered locus">Pro_0288</name>
</gene>
<keyword id="KW-0004">4Fe-4S</keyword>
<keyword id="KW-0028">Amino-acid biosynthesis</keyword>
<keyword id="KW-0100">Branched-chain amino acid biosynthesis</keyword>
<keyword id="KW-0408">Iron</keyword>
<keyword id="KW-0411">Iron-sulfur</keyword>
<keyword id="KW-0432">Leucine biosynthesis</keyword>
<keyword id="KW-0456">Lyase</keyword>
<keyword id="KW-0479">Metal-binding</keyword>
<keyword id="KW-1185">Reference proteome</keyword>
<reference key="1">
    <citation type="journal article" date="2003" name="Proc. Natl. Acad. Sci. U.S.A.">
        <title>Genome sequence of the cyanobacterium Prochlorococcus marinus SS120, a nearly minimal oxyphototrophic genome.</title>
        <authorList>
            <person name="Dufresne A."/>
            <person name="Salanoubat M."/>
            <person name="Partensky F."/>
            <person name="Artiguenave F."/>
            <person name="Axmann I.M."/>
            <person name="Barbe V."/>
            <person name="Duprat S."/>
            <person name="Galperin M.Y."/>
            <person name="Koonin E.V."/>
            <person name="Le Gall F."/>
            <person name="Makarova K.S."/>
            <person name="Ostrowski M."/>
            <person name="Oztas S."/>
            <person name="Robert C."/>
            <person name="Rogozin I.B."/>
            <person name="Scanlan D.J."/>
            <person name="Tandeau de Marsac N."/>
            <person name="Weissenbach J."/>
            <person name="Wincker P."/>
            <person name="Wolf Y.I."/>
            <person name="Hess W.R."/>
        </authorList>
    </citation>
    <scope>NUCLEOTIDE SEQUENCE [LARGE SCALE GENOMIC DNA]</scope>
    <source>
        <strain>SARG / CCMP1375 / SS120</strain>
    </source>
</reference>
<evidence type="ECO:0000255" key="1">
    <source>
        <dbReference type="HAMAP-Rule" id="MF_01026"/>
    </source>
</evidence>
<dbReference type="EC" id="4.2.1.33" evidence="1"/>
<dbReference type="EMBL" id="AE017126">
    <property type="protein sequence ID" value="AAP99334.1"/>
    <property type="molecule type" value="Genomic_DNA"/>
</dbReference>
<dbReference type="RefSeq" id="NP_874682.1">
    <property type="nucleotide sequence ID" value="NC_005042.1"/>
</dbReference>
<dbReference type="RefSeq" id="WP_011124443.1">
    <property type="nucleotide sequence ID" value="NC_005042.1"/>
</dbReference>
<dbReference type="SMR" id="Q7VDT0"/>
<dbReference type="STRING" id="167539.Pro_0288"/>
<dbReference type="EnsemblBacteria" id="AAP99334">
    <property type="protein sequence ID" value="AAP99334"/>
    <property type="gene ID" value="Pro_0288"/>
</dbReference>
<dbReference type="KEGG" id="pma:Pro_0288"/>
<dbReference type="PATRIC" id="fig|167539.5.peg.295"/>
<dbReference type="eggNOG" id="COG0065">
    <property type="taxonomic scope" value="Bacteria"/>
</dbReference>
<dbReference type="HOGENOM" id="CLU_006714_3_4_3"/>
<dbReference type="OrthoDB" id="9802769at2"/>
<dbReference type="UniPathway" id="UPA00048">
    <property type="reaction ID" value="UER00071"/>
</dbReference>
<dbReference type="Proteomes" id="UP000001420">
    <property type="component" value="Chromosome"/>
</dbReference>
<dbReference type="GO" id="GO:0003861">
    <property type="term" value="F:3-isopropylmalate dehydratase activity"/>
    <property type="evidence" value="ECO:0007669"/>
    <property type="project" value="UniProtKB-UniRule"/>
</dbReference>
<dbReference type="GO" id="GO:0051539">
    <property type="term" value="F:4 iron, 4 sulfur cluster binding"/>
    <property type="evidence" value="ECO:0007669"/>
    <property type="project" value="UniProtKB-KW"/>
</dbReference>
<dbReference type="GO" id="GO:0046872">
    <property type="term" value="F:metal ion binding"/>
    <property type="evidence" value="ECO:0007669"/>
    <property type="project" value="UniProtKB-KW"/>
</dbReference>
<dbReference type="GO" id="GO:0009098">
    <property type="term" value="P:L-leucine biosynthetic process"/>
    <property type="evidence" value="ECO:0007669"/>
    <property type="project" value="UniProtKB-UniRule"/>
</dbReference>
<dbReference type="CDD" id="cd01583">
    <property type="entry name" value="IPMI"/>
    <property type="match status" value="1"/>
</dbReference>
<dbReference type="Gene3D" id="3.30.499.10">
    <property type="entry name" value="Aconitase, domain 3"/>
    <property type="match status" value="2"/>
</dbReference>
<dbReference type="HAMAP" id="MF_01026">
    <property type="entry name" value="LeuC_type1"/>
    <property type="match status" value="1"/>
</dbReference>
<dbReference type="InterPro" id="IPR004430">
    <property type="entry name" value="3-IsopropMal_deHydase_lsu"/>
</dbReference>
<dbReference type="InterPro" id="IPR015931">
    <property type="entry name" value="Acnase/IPM_dHydase_lsu_aba_1/3"/>
</dbReference>
<dbReference type="InterPro" id="IPR001030">
    <property type="entry name" value="Acoase/IPM_deHydtase_lsu_aba"/>
</dbReference>
<dbReference type="InterPro" id="IPR018136">
    <property type="entry name" value="Aconitase_4Fe-4S_BS"/>
</dbReference>
<dbReference type="InterPro" id="IPR036008">
    <property type="entry name" value="Aconitase_4Fe-4S_dom"/>
</dbReference>
<dbReference type="InterPro" id="IPR050067">
    <property type="entry name" value="IPM_dehydratase_rel_enz"/>
</dbReference>
<dbReference type="InterPro" id="IPR033941">
    <property type="entry name" value="IPMI_cat"/>
</dbReference>
<dbReference type="NCBIfam" id="TIGR00170">
    <property type="entry name" value="leuC"/>
    <property type="match status" value="1"/>
</dbReference>
<dbReference type="NCBIfam" id="NF004016">
    <property type="entry name" value="PRK05478.1"/>
    <property type="match status" value="1"/>
</dbReference>
<dbReference type="NCBIfam" id="NF009116">
    <property type="entry name" value="PRK12466.1"/>
    <property type="match status" value="1"/>
</dbReference>
<dbReference type="PANTHER" id="PTHR43822:SF9">
    <property type="entry name" value="3-ISOPROPYLMALATE DEHYDRATASE"/>
    <property type="match status" value="1"/>
</dbReference>
<dbReference type="PANTHER" id="PTHR43822">
    <property type="entry name" value="HOMOACONITASE, MITOCHONDRIAL-RELATED"/>
    <property type="match status" value="1"/>
</dbReference>
<dbReference type="Pfam" id="PF00330">
    <property type="entry name" value="Aconitase"/>
    <property type="match status" value="1"/>
</dbReference>
<dbReference type="PRINTS" id="PR00415">
    <property type="entry name" value="ACONITASE"/>
</dbReference>
<dbReference type="SUPFAM" id="SSF53732">
    <property type="entry name" value="Aconitase iron-sulfur domain"/>
    <property type="match status" value="1"/>
</dbReference>
<dbReference type="PROSITE" id="PS00450">
    <property type="entry name" value="ACONITASE_1"/>
    <property type="match status" value="1"/>
</dbReference>
<dbReference type="PROSITE" id="PS01244">
    <property type="entry name" value="ACONITASE_2"/>
    <property type="match status" value="1"/>
</dbReference>
<protein>
    <recommendedName>
        <fullName evidence="1">3-isopropylmalate dehydratase large subunit</fullName>
        <ecNumber evidence="1">4.2.1.33</ecNumber>
    </recommendedName>
    <alternativeName>
        <fullName evidence="1">Alpha-IPM isomerase</fullName>
        <shortName evidence="1">IPMI</shortName>
    </alternativeName>
    <alternativeName>
        <fullName evidence="1">Isopropylmalate isomerase</fullName>
    </alternativeName>
</protein>
<organism>
    <name type="scientific">Prochlorococcus marinus (strain SARG / CCMP1375 / SS120)</name>
    <dbReference type="NCBI Taxonomy" id="167539"/>
    <lineage>
        <taxon>Bacteria</taxon>
        <taxon>Bacillati</taxon>
        <taxon>Cyanobacteriota</taxon>
        <taxon>Cyanophyceae</taxon>
        <taxon>Synechococcales</taxon>
        <taxon>Prochlorococcaceae</taxon>
        <taxon>Prochlorococcus</taxon>
    </lineage>
</organism>